<dbReference type="EC" id="2.3.1.35" evidence="2"/>
<dbReference type="EC" id="2.3.1.1" evidence="2"/>
<dbReference type="EMBL" id="CP009807">
    <property type="protein sequence ID" value="ATZ48008.1"/>
    <property type="molecule type" value="Genomic_DNA"/>
</dbReference>
<dbReference type="RefSeq" id="XP_001555020.1">
    <property type="nucleotide sequence ID" value="XM_001554970.1"/>
</dbReference>
<dbReference type="SMR" id="A6S146"/>
<dbReference type="MEROPS" id="T05.001"/>
<dbReference type="EnsemblFungi" id="Bcin03g02740.1">
    <property type="protein sequence ID" value="Bcin03p02740.1"/>
    <property type="gene ID" value="Bcin03g02740"/>
</dbReference>
<dbReference type="GeneID" id="5435583"/>
<dbReference type="KEGG" id="bfu:BCIN_03g02740"/>
<dbReference type="VEuPathDB" id="FungiDB:Bcin03g02740"/>
<dbReference type="OMA" id="WGRIVMA"/>
<dbReference type="OrthoDB" id="4199794at2759"/>
<dbReference type="UniPathway" id="UPA00068">
    <property type="reaction ID" value="UER00106"/>
</dbReference>
<dbReference type="UniPathway" id="UPA00068">
    <property type="reaction ID" value="UER00111"/>
</dbReference>
<dbReference type="Proteomes" id="UP000001798">
    <property type="component" value="Chromosome bcin03"/>
</dbReference>
<dbReference type="GO" id="GO:0005759">
    <property type="term" value="C:mitochondrial matrix"/>
    <property type="evidence" value="ECO:0007669"/>
    <property type="project" value="UniProtKB-SubCell"/>
</dbReference>
<dbReference type="GO" id="GO:0004358">
    <property type="term" value="F:glutamate N-acetyltransferase activity"/>
    <property type="evidence" value="ECO:0007669"/>
    <property type="project" value="UniProtKB-UniRule"/>
</dbReference>
<dbReference type="GO" id="GO:0004042">
    <property type="term" value="F:L-glutamate N-acetyltransferase activity"/>
    <property type="evidence" value="ECO:0007669"/>
    <property type="project" value="UniProtKB-UniRule"/>
</dbReference>
<dbReference type="GO" id="GO:0006526">
    <property type="term" value="P:L-arginine biosynthetic process"/>
    <property type="evidence" value="ECO:0007669"/>
    <property type="project" value="UniProtKB-UniRule"/>
</dbReference>
<dbReference type="GO" id="GO:0006592">
    <property type="term" value="P:ornithine biosynthetic process"/>
    <property type="evidence" value="ECO:0007669"/>
    <property type="project" value="TreeGrafter"/>
</dbReference>
<dbReference type="CDD" id="cd02152">
    <property type="entry name" value="OAT"/>
    <property type="match status" value="1"/>
</dbReference>
<dbReference type="FunFam" id="3.60.70.12:FF:000001">
    <property type="entry name" value="Arginine biosynthesis bifunctional protein ArgJ, chloroplastic"/>
    <property type="match status" value="1"/>
</dbReference>
<dbReference type="FunFam" id="3.10.20.340:FF:000002">
    <property type="entry name" value="Arginine biosynthesis bifunctional protein ArgJ, mitochondrial"/>
    <property type="match status" value="1"/>
</dbReference>
<dbReference type="FunFam" id="3.30.2330.10:FF:000001">
    <property type="entry name" value="Arginine biosynthesis bifunctional protein ArgJ, mitochondrial"/>
    <property type="match status" value="1"/>
</dbReference>
<dbReference type="Gene3D" id="3.30.2330.10">
    <property type="entry name" value="arginine biosynthesis bifunctional protein suprefamily"/>
    <property type="match status" value="1"/>
</dbReference>
<dbReference type="Gene3D" id="3.10.20.340">
    <property type="entry name" value="ArgJ beta chain, C-terminal domain"/>
    <property type="match status" value="1"/>
</dbReference>
<dbReference type="Gene3D" id="3.60.70.12">
    <property type="entry name" value="L-amino peptidase D-ALA esterase/amidase"/>
    <property type="match status" value="1"/>
</dbReference>
<dbReference type="HAMAP" id="MF_01106">
    <property type="entry name" value="ArgJ"/>
    <property type="match status" value="1"/>
</dbReference>
<dbReference type="InterPro" id="IPR002813">
    <property type="entry name" value="Arg_biosynth_ArgJ"/>
</dbReference>
<dbReference type="InterPro" id="IPR016117">
    <property type="entry name" value="ArgJ-like_dom_sf"/>
</dbReference>
<dbReference type="InterPro" id="IPR042195">
    <property type="entry name" value="ArgJ_beta_C"/>
</dbReference>
<dbReference type="NCBIfam" id="TIGR00120">
    <property type="entry name" value="ArgJ"/>
    <property type="match status" value="1"/>
</dbReference>
<dbReference type="NCBIfam" id="NF003802">
    <property type="entry name" value="PRK05388.1"/>
    <property type="match status" value="1"/>
</dbReference>
<dbReference type="PANTHER" id="PTHR23100">
    <property type="entry name" value="ARGININE BIOSYNTHESIS BIFUNCTIONAL PROTEIN ARGJ"/>
    <property type="match status" value="1"/>
</dbReference>
<dbReference type="PANTHER" id="PTHR23100:SF0">
    <property type="entry name" value="ARGININE BIOSYNTHESIS BIFUNCTIONAL PROTEIN ARGJ, MITOCHONDRIAL"/>
    <property type="match status" value="1"/>
</dbReference>
<dbReference type="Pfam" id="PF01960">
    <property type="entry name" value="ArgJ"/>
    <property type="match status" value="1"/>
</dbReference>
<dbReference type="SUPFAM" id="SSF56266">
    <property type="entry name" value="DmpA/ArgJ-like"/>
    <property type="match status" value="1"/>
</dbReference>
<evidence type="ECO:0000250" key="1"/>
<evidence type="ECO:0000255" key="2">
    <source>
        <dbReference type="HAMAP-Rule" id="MF_03124"/>
    </source>
</evidence>
<comment type="function">
    <text evidence="2">Catalyzes two activities which are involved in the cyclic version of arginine biosynthesis: the synthesis of acetylglutamate from glutamate and acetyl-CoA, and of ornithine by transacetylation between acetylornithine and glutamate.</text>
</comment>
<comment type="catalytic activity">
    <reaction evidence="2">
        <text>N(2)-acetyl-L-ornithine + L-glutamate = N-acetyl-L-glutamate + L-ornithine</text>
        <dbReference type="Rhea" id="RHEA:15349"/>
        <dbReference type="ChEBI" id="CHEBI:29985"/>
        <dbReference type="ChEBI" id="CHEBI:44337"/>
        <dbReference type="ChEBI" id="CHEBI:46911"/>
        <dbReference type="ChEBI" id="CHEBI:57805"/>
        <dbReference type="EC" id="2.3.1.35"/>
    </reaction>
</comment>
<comment type="catalytic activity">
    <reaction evidence="2">
        <text>L-glutamate + acetyl-CoA = N-acetyl-L-glutamate + CoA + H(+)</text>
        <dbReference type="Rhea" id="RHEA:24292"/>
        <dbReference type="ChEBI" id="CHEBI:15378"/>
        <dbReference type="ChEBI" id="CHEBI:29985"/>
        <dbReference type="ChEBI" id="CHEBI:44337"/>
        <dbReference type="ChEBI" id="CHEBI:57287"/>
        <dbReference type="ChEBI" id="CHEBI:57288"/>
        <dbReference type="EC" id="2.3.1.1"/>
    </reaction>
</comment>
<comment type="pathway">
    <text evidence="2">Amino-acid biosynthesis; L-arginine biosynthesis; L-ornithine and N-acetyl-L-glutamate from L-glutamate and N(2)-acetyl-L-ornithine (cyclic): step 1/1.</text>
</comment>
<comment type="pathway">
    <text evidence="2">Amino-acid biosynthesis; L-arginine biosynthesis; N(2)-acetyl-L-ornithine from L-glutamate: step 1/4.</text>
</comment>
<comment type="subunit">
    <text evidence="2">Heterodimer of an alpha and a beta chain.</text>
</comment>
<comment type="subcellular location">
    <subcellularLocation>
        <location evidence="2">Mitochondrion matrix</location>
    </subcellularLocation>
</comment>
<comment type="PTM">
    <text evidence="2">The alpha and beta chains are autoproteolytically processed from a single precursor protein within the mitochondrion.</text>
</comment>
<comment type="miscellaneous">
    <text evidence="2">This protein may be expected to contain an N-terminal transit peptide but none has been predicted.</text>
</comment>
<comment type="similarity">
    <text evidence="2">Belongs to the ArgJ family.</text>
</comment>
<organism>
    <name type="scientific">Botryotinia fuckeliana (strain B05.10)</name>
    <name type="common">Noble rot fungus</name>
    <name type="synonym">Botrytis cinerea</name>
    <dbReference type="NCBI Taxonomy" id="332648"/>
    <lineage>
        <taxon>Eukaryota</taxon>
        <taxon>Fungi</taxon>
        <taxon>Dikarya</taxon>
        <taxon>Ascomycota</taxon>
        <taxon>Pezizomycotina</taxon>
        <taxon>Leotiomycetes</taxon>
        <taxon>Helotiales</taxon>
        <taxon>Sclerotiniaceae</taxon>
        <taxon>Botrytis</taxon>
    </lineage>
</organism>
<reference key="1">
    <citation type="journal article" date="2011" name="PLoS Genet.">
        <title>Genomic analysis of the necrotrophic fungal pathogens Sclerotinia sclerotiorum and Botrytis cinerea.</title>
        <authorList>
            <person name="Amselem J."/>
            <person name="Cuomo C.A."/>
            <person name="van Kan J.A.L."/>
            <person name="Viaud M."/>
            <person name="Benito E.P."/>
            <person name="Couloux A."/>
            <person name="Coutinho P.M."/>
            <person name="de Vries R.P."/>
            <person name="Dyer P.S."/>
            <person name="Fillinger S."/>
            <person name="Fournier E."/>
            <person name="Gout L."/>
            <person name="Hahn M."/>
            <person name="Kohn L."/>
            <person name="Lapalu N."/>
            <person name="Plummer K.M."/>
            <person name="Pradier J.-M."/>
            <person name="Quevillon E."/>
            <person name="Sharon A."/>
            <person name="Simon A."/>
            <person name="ten Have A."/>
            <person name="Tudzynski B."/>
            <person name="Tudzynski P."/>
            <person name="Wincker P."/>
            <person name="Andrew M."/>
            <person name="Anthouard V."/>
            <person name="Beever R.E."/>
            <person name="Beffa R."/>
            <person name="Benoit I."/>
            <person name="Bouzid O."/>
            <person name="Brault B."/>
            <person name="Chen Z."/>
            <person name="Choquer M."/>
            <person name="Collemare J."/>
            <person name="Cotton P."/>
            <person name="Danchin E.G."/>
            <person name="Da Silva C."/>
            <person name="Gautier A."/>
            <person name="Giraud C."/>
            <person name="Giraud T."/>
            <person name="Gonzalez C."/>
            <person name="Grossetete S."/>
            <person name="Gueldener U."/>
            <person name="Henrissat B."/>
            <person name="Howlett B.J."/>
            <person name="Kodira C."/>
            <person name="Kretschmer M."/>
            <person name="Lappartient A."/>
            <person name="Leroch M."/>
            <person name="Levis C."/>
            <person name="Mauceli E."/>
            <person name="Neuveglise C."/>
            <person name="Oeser B."/>
            <person name="Pearson M."/>
            <person name="Poulain J."/>
            <person name="Poussereau N."/>
            <person name="Quesneville H."/>
            <person name="Rascle C."/>
            <person name="Schumacher J."/>
            <person name="Segurens B."/>
            <person name="Sexton A."/>
            <person name="Silva E."/>
            <person name="Sirven C."/>
            <person name="Soanes D.M."/>
            <person name="Talbot N.J."/>
            <person name="Templeton M."/>
            <person name="Yandava C."/>
            <person name="Yarden O."/>
            <person name="Zeng Q."/>
            <person name="Rollins J.A."/>
            <person name="Lebrun M.-H."/>
            <person name="Dickman M."/>
        </authorList>
    </citation>
    <scope>NUCLEOTIDE SEQUENCE [LARGE SCALE GENOMIC DNA]</scope>
    <source>
        <strain>B05.10</strain>
    </source>
</reference>
<reference key="2">
    <citation type="journal article" date="2012" name="Eukaryot. Cell">
        <title>Genome update of Botrytis cinerea strains B05.10 and T4.</title>
        <authorList>
            <person name="Staats M."/>
            <person name="van Kan J.A.L."/>
        </authorList>
    </citation>
    <scope>NUCLEOTIDE SEQUENCE [LARGE SCALE GENOMIC DNA]</scope>
    <scope>GENOME REANNOTATION</scope>
    <source>
        <strain>B05.10</strain>
    </source>
</reference>
<reference key="3">
    <citation type="journal article" date="2017" name="Mol. Plant Pathol.">
        <title>A gapless genome sequence of the fungus Botrytis cinerea.</title>
        <authorList>
            <person name="van Kan J.A.L."/>
            <person name="Stassen J.H.M."/>
            <person name="Mosbach A."/>
            <person name="van der Lee T.A.J."/>
            <person name="Faino L."/>
            <person name="Farmer A.D."/>
            <person name="Papasotiriou D.G."/>
            <person name="Zhou S."/>
            <person name="Seidl M.F."/>
            <person name="Cottam E."/>
            <person name="Edel D."/>
            <person name="Hahn M."/>
            <person name="Schwartz D.C."/>
            <person name="Dietrich R.A."/>
            <person name="Widdison S."/>
            <person name="Scalliet G."/>
        </authorList>
    </citation>
    <scope>NUCLEOTIDE SEQUENCE [LARGE SCALE GENOMIC DNA]</scope>
    <scope>GENOME REANNOTATION</scope>
    <source>
        <strain>B05.10</strain>
    </source>
</reference>
<feature type="chain" id="PRO_0000398026" description="Arginine biosynthesis bifunctional protein ArgJ 1 alpha chain" evidence="1">
    <location>
        <begin position="1"/>
        <end position="243"/>
    </location>
</feature>
<feature type="chain" id="PRO_0000398027" description="Arginine biosynthesis bifunctional protein ArgJ 1 beta chain" evidence="1">
    <location>
        <begin position="244"/>
        <end position="475"/>
    </location>
</feature>
<feature type="active site" description="Nucleophile" evidence="2">
    <location>
        <position position="244"/>
    </location>
</feature>
<feature type="binding site" evidence="2">
    <location>
        <position position="204"/>
    </location>
    <ligand>
        <name>substrate</name>
    </ligand>
</feature>
<feature type="binding site" evidence="2">
    <location>
        <position position="233"/>
    </location>
    <ligand>
        <name>substrate</name>
    </ligand>
</feature>
<feature type="binding site" evidence="2">
    <location>
        <position position="244"/>
    </location>
    <ligand>
        <name>substrate</name>
    </ligand>
</feature>
<feature type="binding site" evidence="2">
    <location>
        <position position="331"/>
    </location>
    <ligand>
        <name>substrate</name>
    </ligand>
</feature>
<feature type="binding site" evidence="2">
    <location>
        <position position="470"/>
    </location>
    <ligand>
        <name>substrate</name>
    </ligand>
</feature>
<feature type="binding site" evidence="2">
    <location>
        <position position="475"/>
    </location>
    <ligand>
        <name>substrate</name>
    </ligand>
</feature>
<feature type="site" description="Involved in the stabilization of negative charge on the oxyanion by the formation of the oxyanion hole" evidence="2">
    <location>
        <position position="165"/>
    </location>
</feature>
<feature type="site" description="Involved in the stabilization of negative charge on the oxyanion by the formation of the oxyanion hole" evidence="2">
    <location>
        <position position="166"/>
    </location>
</feature>
<feature type="site" description="Cleavage; by autolysis" evidence="2">
    <location>
        <begin position="243"/>
        <end position="244"/>
    </location>
</feature>
<gene>
    <name type="ORF">BC1G_06543</name>
    <name type="ORF">BCIN_03g02740</name>
</gene>
<proteinExistence type="inferred from homology"/>
<accession>A6S146</accession>
<accession>A0A384JBJ9</accession>
<name>ARGJ1_BOTFB</name>
<protein>
    <recommendedName>
        <fullName>Arginine biosynthesis bifunctional protein ArgJ 1, mitochondrial</fullName>
    </recommendedName>
    <domain>
        <recommendedName>
            <fullName evidence="2">Glutamate N-acetyltransferase</fullName>
            <shortName evidence="2">GAT</shortName>
            <ecNumber evidence="2">2.3.1.35</ecNumber>
        </recommendedName>
        <alternativeName>
            <fullName evidence="2">Ornithine acetyltransferase</fullName>
            <shortName evidence="2">OATase</shortName>
        </alternativeName>
        <alternativeName>
            <fullName evidence="2">Ornithine transacetylase</fullName>
        </alternativeName>
    </domain>
    <domain>
        <recommendedName>
            <fullName evidence="2">Amino-acid acetyltransferase</fullName>
            <ecNumber evidence="2">2.3.1.1</ecNumber>
        </recommendedName>
        <alternativeName>
            <fullName evidence="2">N-acetylglutamate synthase</fullName>
            <shortName evidence="2">AGS</shortName>
        </alternativeName>
    </domain>
    <component>
        <recommendedName>
            <fullName>Arginine biosynthesis bifunctional protein ArgJ 1 alpha chain</fullName>
        </recommendedName>
    </component>
    <component>
        <recommendedName>
            <fullName>Arginine biosynthesis bifunctional protein ArgJ 1 beta chain</fullName>
        </recommendedName>
    </component>
</protein>
<sequence>MALNACTKLPVARLIRPSASYHPAISSIRYYSAPPESTIPAAKLKYIPTSGTYPKGFLVSGTHVGVKPTNKSTPDLAFLASETPCAAAAVFTKNKFQAAPVTVSRKMLQRRSNTGIRSVIINSGCANAVTGKGGMEDAEKMGAEADRCFDTPSDGKGGSSIVMSTGVIGQRLPIQKILLKIPTAFDGLGSSHEHWLATATAICTTDTFPKLLSRTFSLPSSPEVEYRMAGMTKGAGMIHPNMATLLGMIATDAPIAPTLLPSLLTKAVNKSFNSISIDGDTSTNDTVAVLANGAAGGKEVTSESSEDHAAFQKVLTEFATDLAKLVVRDGEGATKFVTIRVTEAPSEIGARKIASTIARSPLVKTALYGKDANWGRILCATGYSQISEPGQPINEVPEIIPEKTSVSFIPSDGSPELKLLVNGEPESVDEARAAEILEHEDLEILIKLGGGKEEAVYWTCDFSHEYVTINGDYRT</sequence>
<keyword id="KW-0012">Acyltransferase</keyword>
<keyword id="KW-0028">Amino-acid biosynthesis</keyword>
<keyword id="KW-0055">Arginine biosynthesis</keyword>
<keyword id="KW-0068">Autocatalytic cleavage</keyword>
<keyword id="KW-0496">Mitochondrion</keyword>
<keyword id="KW-0511">Multifunctional enzyme</keyword>
<keyword id="KW-1185">Reference proteome</keyword>
<keyword id="KW-0808">Transferase</keyword>